<sequence>MSWLSKLMPSGIRTENTPAKKRSVPEGLWEKCSNCGSALYGPELEENLEVCPKCDHHMAIRARARLAALFDLDSPTTEIAAQLGPVDVLKFKDQKKYGERIKASQKSSGEYDALIAMRGMLKGNPLVAAAFDFAFMGGSMGSVVGERFARAAEVALEVGCPFVCFSASGGARMQEGLFSLMQMAKTSAALGRLREAGLPYISVLTHPTTGGVSASFAMLGDINIAEPHALIGFAGPRVIEQTVRETLPEGFQRSEFLLDHGAIDQICDRRDMRDRIAELTTMMMRQPHPQDADAA</sequence>
<reference key="1">
    <citation type="journal article" date="2005" name="Genome Res.">
        <title>Comparative and functional genomic analyses of the pathogenicity of phytopathogen Xanthomonas campestris pv. campestris.</title>
        <authorList>
            <person name="Qian W."/>
            <person name="Jia Y."/>
            <person name="Ren S.-X."/>
            <person name="He Y.-Q."/>
            <person name="Feng J.-X."/>
            <person name="Lu L.-F."/>
            <person name="Sun Q."/>
            <person name="Ying G."/>
            <person name="Tang D.-J."/>
            <person name="Tang H."/>
            <person name="Wu W."/>
            <person name="Hao P."/>
            <person name="Wang L."/>
            <person name="Jiang B.-L."/>
            <person name="Zeng S."/>
            <person name="Gu W.-Y."/>
            <person name="Lu G."/>
            <person name="Rong L."/>
            <person name="Tian Y."/>
            <person name="Yao Z."/>
            <person name="Fu G."/>
            <person name="Chen B."/>
            <person name="Fang R."/>
            <person name="Qiang B."/>
            <person name="Chen Z."/>
            <person name="Zhao G.-P."/>
            <person name="Tang J.-L."/>
            <person name="He C."/>
        </authorList>
    </citation>
    <scope>NUCLEOTIDE SEQUENCE [LARGE SCALE GENOMIC DNA]</scope>
    <source>
        <strain>8004</strain>
    </source>
</reference>
<dbReference type="EC" id="2.1.3.15" evidence="1"/>
<dbReference type="EMBL" id="CP000050">
    <property type="protein sequence ID" value="AAY48644.1"/>
    <property type="molecule type" value="Genomic_DNA"/>
</dbReference>
<dbReference type="RefSeq" id="WP_011037670.1">
    <property type="nucleotide sequence ID" value="NZ_CP155948.1"/>
</dbReference>
<dbReference type="SMR" id="Q4UWC9"/>
<dbReference type="KEGG" id="xcb:XC_1578"/>
<dbReference type="HOGENOM" id="CLU_015486_1_0_6"/>
<dbReference type="UniPathway" id="UPA00655">
    <property type="reaction ID" value="UER00711"/>
</dbReference>
<dbReference type="Proteomes" id="UP000000420">
    <property type="component" value="Chromosome"/>
</dbReference>
<dbReference type="GO" id="GO:0009329">
    <property type="term" value="C:acetate CoA-transferase complex"/>
    <property type="evidence" value="ECO:0007669"/>
    <property type="project" value="TreeGrafter"/>
</dbReference>
<dbReference type="GO" id="GO:0003989">
    <property type="term" value="F:acetyl-CoA carboxylase activity"/>
    <property type="evidence" value="ECO:0007669"/>
    <property type="project" value="InterPro"/>
</dbReference>
<dbReference type="GO" id="GO:0005524">
    <property type="term" value="F:ATP binding"/>
    <property type="evidence" value="ECO:0007669"/>
    <property type="project" value="UniProtKB-KW"/>
</dbReference>
<dbReference type="GO" id="GO:0016743">
    <property type="term" value="F:carboxyl- or carbamoyltransferase activity"/>
    <property type="evidence" value="ECO:0007669"/>
    <property type="project" value="UniProtKB-UniRule"/>
</dbReference>
<dbReference type="GO" id="GO:0008270">
    <property type="term" value="F:zinc ion binding"/>
    <property type="evidence" value="ECO:0007669"/>
    <property type="project" value="UniProtKB-UniRule"/>
</dbReference>
<dbReference type="GO" id="GO:0006633">
    <property type="term" value="P:fatty acid biosynthetic process"/>
    <property type="evidence" value="ECO:0007669"/>
    <property type="project" value="UniProtKB-KW"/>
</dbReference>
<dbReference type="GO" id="GO:2001295">
    <property type="term" value="P:malonyl-CoA biosynthetic process"/>
    <property type="evidence" value="ECO:0007669"/>
    <property type="project" value="UniProtKB-UniRule"/>
</dbReference>
<dbReference type="Gene3D" id="3.90.226.10">
    <property type="entry name" value="2-enoyl-CoA Hydratase, Chain A, domain 1"/>
    <property type="match status" value="1"/>
</dbReference>
<dbReference type="HAMAP" id="MF_01395">
    <property type="entry name" value="AcetylCoA_CT_beta"/>
    <property type="match status" value="1"/>
</dbReference>
<dbReference type="InterPro" id="IPR034733">
    <property type="entry name" value="AcCoA_carboxyl_beta"/>
</dbReference>
<dbReference type="InterPro" id="IPR000438">
    <property type="entry name" value="Acetyl_CoA_COase_Trfase_b_su"/>
</dbReference>
<dbReference type="InterPro" id="IPR029045">
    <property type="entry name" value="ClpP/crotonase-like_dom_sf"/>
</dbReference>
<dbReference type="InterPro" id="IPR011762">
    <property type="entry name" value="COA_CT_N"/>
</dbReference>
<dbReference type="InterPro" id="IPR041010">
    <property type="entry name" value="Znf-ACC"/>
</dbReference>
<dbReference type="NCBIfam" id="TIGR00515">
    <property type="entry name" value="accD"/>
    <property type="match status" value="1"/>
</dbReference>
<dbReference type="PANTHER" id="PTHR42995">
    <property type="entry name" value="ACETYL-COENZYME A CARBOXYLASE CARBOXYL TRANSFERASE SUBUNIT BETA, CHLOROPLASTIC"/>
    <property type="match status" value="1"/>
</dbReference>
<dbReference type="PANTHER" id="PTHR42995:SF5">
    <property type="entry name" value="ACETYL-COENZYME A CARBOXYLASE CARBOXYL TRANSFERASE SUBUNIT BETA, CHLOROPLASTIC"/>
    <property type="match status" value="1"/>
</dbReference>
<dbReference type="Pfam" id="PF01039">
    <property type="entry name" value="Carboxyl_trans"/>
    <property type="match status" value="1"/>
</dbReference>
<dbReference type="Pfam" id="PF17848">
    <property type="entry name" value="Zn_ribbon_ACC"/>
    <property type="match status" value="1"/>
</dbReference>
<dbReference type="PRINTS" id="PR01070">
    <property type="entry name" value="ACCCTRFRASEB"/>
</dbReference>
<dbReference type="SUPFAM" id="SSF52096">
    <property type="entry name" value="ClpP/crotonase"/>
    <property type="match status" value="1"/>
</dbReference>
<dbReference type="PROSITE" id="PS50980">
    <property type="entry name" value="COA_CT_NTER"/>
    <property type="match status" value="1"/>
</dbReference>
<keyword id="KW-0067">ATP-binding</keyword>
<keyword id="KW-0963">Cytoplasm</keyword>
<keyword id="KW-0275">Fatty acid biosynthesis</keyword>
<keyword id="KW-0276">Fatty acid metabolism</keyword>
<keyword id="KW-0444">Lipid biosynthesis</keyword>
<keyword id="KW-0443">Lipid metabolism</keyword>
<keyword id="KW-0479">Metal-binding</keyword>
<keyword id="KW-0547">Nucleotide-binding</keyword>
<keyword id="KW-0808">Transferase</keyword>
<keyword id="KW-0862">Zinc</keyword>
<keyword id="KW-0863">Zinc-finger</keyword>
<protein>
    <recommendedName>
        <fullName evidence="1">Acetyl-coenzyme A carboxylase carboxyl transferase subunit beta</fullName>
        <shortName evidence="1">ACCase subunit beta</shortName>
        <shortName evidence="1">Acetyl-CoA carboxylase carboxyltransferase subunit beta</shortName>
        <ecNumber evidence="1">2.1.3.15</ecNumber>
    </recommendedName>
</protein>
<organism>
    <name type="scientific">Xanthomonas campestris pv. campestris (strain 8004)</name>
    <dbReference type="NCBI Taxonomy" id="314565"/>
    <lineage>
        <taxon>Bacteria</taxon>
        <taxon>Pseudomonadati</taxon>
        <taxon>Pseudomonadota</taxon>
        <taxon>Gammaproteobacteria</taxon>
        <taxon>Lysobacterales</taxon>
        <taxon>Lysobacteraceae</taxon>
        <taxon>Xanthomonas</taxon>
    </lineage>
</organism>
<gene>
    <name evidence="1" type="primary">accD</name>
    <name type="ordered locus">XC_1578</name>
</gene>
<feature type="chain" id="PRO_0000359097" description="Acetyl-coenzyme A carboxylase carboxyl transferase subunit beta">
    <location>
        <begin position="1"/>
        <end position="295"/>
    </location>
</feature>
<feature type="domain" description="CoA carboxyltransferase N-terminal" evidence="2">
    <location>
        <begin position="28"/>
        <end position="295"/>
    </location>
</feature>
<feature type="zinc finger region" description="C4-type" evidence="1">
    <location>
        <begin position="32"/>
        <end position="54"/>
    </location>
</feature>
<feature type="region of interest" description="Disordered" evidence="3">
    <location>
        <begin position="1"/>
        <end position="20"/>
    </location>
</feature>
<feature type="binding site" evidence="1">
    <location>
        <position position="32"/>
    </location>
    <ligand>
        <name>Zn(2+)</name>
        <dbReference type="ChEBI" id="CHEBI:29105"/>
    </ligand>
</feature>
<feature type="binding site" evidence="1">
    <location>
        <position position="35"/>
    </location>
    <ligand>
        <name>Zn(2+)</name>
        <dbReference type="ChEBI" id="CHEBI:29105"/>
    </ligand>
</feature>
<feature type="binding site" evidence="1">
    <location>
        <position position="51"/>
    </location>
    <ligand>
        <name>Zn(2+)</name>
        <dbReference type="ChEBI" id="CHEBI:29105"/>
    </ligand>
</feature>
<feature type="binding site" evidence="1">
    <location>
        <position position="54"/>
    </location>
    <ligand>
        <name>Zn(2+)</name>
        <dbReference type="ChEBI" id="CHEBI:29105"/>
    </ligand>
</feature>
<name>ACCD_XANC8</name>
<accession>Q4UWC9</accession>
<evidence type="ECO:0000255" key="1">
    <source>
        <dbReference type="HAMAP-Rule" id="MF_01395"/>
    </source>
</evidence>
<evidence type="ECO:0000255" key="2">
    <source>
        <dbReference type="PROSITE-ProRule" id="PRU01136"/>
    </source>
</evidence>
<evidence type="ECO:0000256" key="3">
    <source>
        <dbReference type="SAM" id="MobiDB-lite"/>
    </source>
</evidence>
<proteinExistence type="inferred from homology"/>
<comment type="function">
    <text evidence="1">Component of the acetyl coenzyme A carboxylase (ACC) complex. Biotin carboxylase (BC) catalyzes the carboxylation of biotin on its carrier protein (BCCP) and then the CO(2) group is transferred by the transcarboxylase to acetyl-CoA to form malonyl-CoA.</text>
</comment>
<comment type="catalytic activity">
    <reaction evidence="1">
        <text>N(6)-carboxybiotinyl-L-lysyl-[protein] + acetyl-CoA = N(6)-biotinyl-L-lysyl-[protein] + malonyl-CoA</text>
        <dbReference type="Rhea" id="RHEA:54728"/>
        <dbReference type="Rhea" id="RHEA-COMP:10505"/>
        <dbReference type="Rhea" id="RHEA-COMP:10506"/>
        <dbReference type="ChEBI" id="CHEBI:57288"/>
        <dbReference type="ChEBI" id="CHEBI:57384"/>
        <dbReference type="ChEBI" id="CHEBI:83144"/>
        <dbReference type="ChEBI" id="CHEBI:83145"/>
        <dbReference type="EC" id="2.1.3.15"/>
    </reaction>
</comment>
<comment type="cofactor">
    <cofactor evidence="1">
        <name>Zn(2+)</name>
        <dbReference type="ChEBI" id="CHEBI:29105"/>
    </cofactor>
    <text evidence="1">Binds 1 zinc ion per subunit.</text>
</comment>
<comment type="pathway">
    <text evidence="1">Lipid metabolism; malonyl-CoA biosynthesis; malonyl-CoA from acetyl-CoA: step 1/1.</text>
</comment>
<comment type="subunit">
    <text evidence="1">Acetyl-CoA carboxylase is a heterohexamer composed of biotin carboxyl carrier protein (AccB), biotin carboxylase (AccC) and two subunits each of ACCase subunit alpha (AccA) and ACCase subunit beta (AccD).</text>
</comment>
<comment type="subcellular location">
    <subcellularLocation>
        <location evidence="1">Cytoplasm</location>
    </subcellularLocation>
</comment>
<comment type="similarity">
    <text evidence="1">Belongs to the AccD/PCCB family.</text>
</comment>